<reference key="1">
    <citation type="submission" date="2001-07" db="EMBL/GenBank/DDBJ databases">
        <title>Genome-wide discovery and analysis of human seven transmembrane helix receptor genes.</title>
        <authorList>
            <person name="Suwa M."/>
            <person name="Sato T."/>
            <person name="Okouchi I."/>
            <person name="Arita M."/>
            <person name="Futami K."/>
            <person name="Matsumoto S."/>
            <person name="Tsutsumi S."/>
            <person name="Aburatani H."/>
            <person name="Asai K."/>
            <person name="Akiyama Y."/>
        </authorList>
    </citation>
    <scope>NUCLEOTIDE SEQUENCE [GENOMIC DNA]</scope>
</reference>
<reference key="2">
    <citation type="journal article" date="2004" name="Nature">
        <title>DNA sequence and analysis of human chromosome 9.</title>
        <authorList>
            <person name="Humphray S.J."/>
            <person name="Oliver K."/>
            <person name="Hunt A.R."/>
            <person name="Plumb R.W."/>
            <person name="Loveland J.E."/>
            <person name="Howe K.L."/>
            <person name="Andrews T.D."/>
            <person name="Searle S."/>
            <person name="Hunt S.E."/>
            <person name="Scott C.E."/>
            <person name="Jones M.C."/>
            <person name="Ainscough R."/>
            <person name="Almeida J.P."/>
            <person name="Ambrose K.D."/>
            <person name="Ashwell R.I.S."/>
            <person name="Babbage A.K."/>
            <person name="Babbage S."/>
            <person name="Bagguley C.L."/>
            <person name="Bailey J."/>
            <person name="Banerjee R."/>
            <person name="Barker D.J."/>
            <person name="Barlow K.F."/>
            <person name="Bates K."/>
            <person name="Beasley H."/>
            <person name="Beasley O."/>
            <person name="Bird C.P."/>
            <person name="Bray-Allen S."/>
            <person name="Brown A.J."/>
            <person name="Brown J.Y."/>
            <person name="Burford D."/>
            <person name="Burrill W."/>
            <person name="Burton J."/>
            <person name="Carder C."/>
            <person name="Carter N.P."/>
            <person name="Chapman J.C."/>
            <person name="Chen Y."/>
            <person name="Clarke G."/>
            <person name="Clark S.Y."/>
            <person name="Clee C.M."/>
            <person name="Clegg S."/>
            <person name="Collier R.E."/>
            <person name="Corby N."/>
            <person name="Crosier M."/>
            <person name="Cummings A.T."/>
            <person name="Davies J."/>
            <person name="Dhami P."/>
            <person name="Dunn M."/>
            <person name="Dutta I."/>
            <person name="Dyer L.W."/>
            <person name="Earthrowl M.E."/>
            <person name="Faulkner L."/>
            <person name="Fleming C.J."/>
            <person name="Frankish A."/>
            <person name="Frankland J.A."/>
            <person name="French L."/>
            <person name="Fricker D.G."/>
            <person name="Garner P."/>
            <person name="Garnett J."/>
            <person name="Ghori J."/>
            <person name="Gilbert J.G.R."/>
            <person name="Glison C."/>
            <person name="Grafham D.V."/>
            <person name="Gribble S."/>
            <person name="Griffiths C."/>
            <person name="Griffiths-Jones S."/>
            <person name="Grocock R."/>
            <person name="Guy J."/>
            <person name="Hall R.E."/>
            <person name="Hammond S."/>
            <person name="Harley J.L."/>
            <person name="Harrison E.S.I."/>
            <person name="Hart E.A."/>
            <person name="Heath P.D."/>
            <person name="Henderson C.D."/>
            <person name="Hopkins B.L."/>
            <person name="Howard P.J."/>
            <person name="Howden P.J."/>
            <person name="Huckle E."/>
            <person name="Johnson C."/>
            <person name="Johnson D."/>
            <person name="Joy A.A."/>
            <person name="Kay M."/>
            <person name="Keenan S."/>
            <person name="Kershaw J.K."/>
            <person name="Kimberley A.M."/>
            <person name="King A."/>
            <person name="Knights A."/>
            <person name="Laird G.K."/>
            <person name="Langford C."/>
            <person name="Lawlor S."/>
            <person name="Leongamornlert D.A."/>
            <person name="Leversha M."/>
            <person name="Lloyd C."/>
            <person name="Lloyd D.M."/>
            <person name="Lovell J."/>
            <person name="Martin S."/>
            <person name="Mashreghi-Mohammadi M."/>
            <person name="Matthews L."/>
            <person name="McLaren S."/>
            <person name="McLay K.E."/>
            <person name="McMurray A."/>
            <person name="Milne S."/>
            <person name="Nickerson T."/>
            <person name="Nisbett J."/>
            <person name="Nordsiek G."/>
            <person name="Pearce A.V."/>
            <person name="Peck A.I."/>
            <person name="Porter K.M."/>
            <person name="Pandian R."/>
            <person name="Pelan S."/>
            <person name="Phillimore B."/>
            <person name="Povey S."/>
            <person name="Ramsey Y."/>
            <person name="Rand V."/>
            <person name="Scharfe M."/>
            <person name="Sehra H.K."/>
            <person name="Shownkeen R."/>
            <person name="Sims S.K."/>
            <person name="Skuce C.D."/>
            <person name="Smith M."/>
            <person name="Steward C.A."/>
            <person name="Swarbreck D."/>
            <person name="Sycamore N."/>
            <person name="Tester J."/>
            <person name="Thorpe A."/>
            <person name="Tracey A."/>
            <person name="Tromans A."/>
            <person name="Thomas D.W."/>
            <person name="Wall M."/>
            <person name="Wallis J.M."/>
            <person name="West A.P."/>
            <person name="Whitehead S.L."/>
            <person name="Willey D.L."/>
            <person name="Williams S.A."/>
            <person name="Wilming L."/>
            <person name="Wray P.W."/>
            <person name="Young L."/>
            <person name="Ashurst J.L."/>
            <person name="Coulson A."/>
            <person name="Blocker H."/>
            <person name="Durbin R.M."/>
            <person name="Sulston J.E."/>
            <person name="Hubbard T."/>
            <person name="Jackson M.J."/>
            <person name="Bentley D.R."/>
            <person name="Beck S."/>
            <person name="Rogers J."/>
            <person name="Dunham I."/>
        </authorList>
    </citation>
    <scope>NUCLEOTIDE SEQUENCE [LARGE SCALE GENOMIC DNA]</scope>
</reference>
<reference key="3">
    <citation type="journal article" date="2002" name="Genomics">
        <title>DEFOG: a practical scheme for deciphering families of genes.</title>
        <authorList>
            <person name="Fuchs T."/>
            <person name="Malecova B."/>
            <person name="Linhart C."/>
            <person name="Sharan R."/>
            <person name="Khen M."/>
            <person name="Herwig R."/>
            <person name="Shmulevich D."/>
            <person name="Elkon R."/>
            <person name="Steinfath M."/>
            <person name="O'Brien J.K."/>
            <person name="Radelof U."/>
            <person name="Lehrach H."/>
            <person name="Lancet D."/>
            <person name="Shamir R."/>
        </authorList>
    </citation>
    <scope>NUCLEOTIDE SEQUENCE [GENOMIC DNA] OF 68-289</scope>
</reference>
<comment type="function">
    <text evidence="3">Odorant receptor.</text>
</comment>
<comment type="subcellular location">
    <subcellularLocation>
        <location>Cell membrane</location>
        <topology>Multi-pass membrane protein</topology>
    </subcellularLocation>
</comment>
<comment type="similarity">
    <text evidence="2">Belongs to the G-protein coupled receptor 1 family.</text>
</comment>
<comment type="online information" name="Human Olfactory Receptor Data Exploratorium (HORDE)">
    <link uri="http://genome.weizmann.ac.il/horde/card/index/symbol:OR13C8"/>
</comment>
<feature type="chain" id="PRO_0000150735" description="Olfactory receptor 13C8">
    <location>
        <begin position="1"/>
        <end position="320"/>
    </location>
</feature>
<feature type="topological domain" description="Extracellular" evidence="1">
    <location>
        <begin position="1"/>
        <end position="25"/>
    </location>
</feature>
<feature type="transmembrane region" description="Helical; Name=1" evidence="1">
    <location>
        <begin position="26"/>
        <end position="46"/>
    </location>
</feature>
<feature type="topological domain" description="Cytoplasmic" evidence="1">
    <location>
        <begin position="47"/>
        <end position="54"/>
    </location>
</feature>
<feature type="transmembrane region" description="Helical; Name=2" evidence="1">
    <location>
        <begin position="55"/>
        <end position="75"/>
    </location>
</feature>
<feature type="topological domain" description="Extracellular" evidence="1">
    <location>
        <begin position="76"/>
        <end position="99"/>
    </location>
</feature>
<feature type="transmembrane region" description="Helical; Name=3" evidence="1">
    <location>
        <begin position="100"/>
        <end position="120"/>
    </location>
</feature>
<feature type="topological domain" description="Cytoplasmic" evidence="1">
    <location>
        <begin position="121"/>
        <end position="139"/>
    </location>
</feature>
<feature type="transmembrane region" description="Helical; Name=4" evidence="1">
    <location>
        <begin position="140"/>
        <end position="160"/>
    </location>
</feature>
<feature type="topological domain" description="Extracellular" evidence="1">
    <location>
        <begin position="161"/>
        <end position="197"/>
    </location>
</feature>
<feature type="transmembrane region" description="Helical; Name=5" evidence="1">
    <location>
        <begin position="198"/>
        <end position="217"/>
    </location>
</feature>
<feature type="topological domain" description="Cytoplasmic" evidence="1">
    <location>
        <begin position="218"/>
        <end position="237"/>
    </location>
</feature>
<feature type="transmembrane region" description="Helical; Name=6" evidence="1">
    <location>
        <begin position="238"/>
        <end position="258"/>
    </location>
</feature>
<feature type="topological domain" description="Extracellular" evidence="1">
    <location>
        <begin position="259"/>
        <end position="277"/>
    </location>
</feature>
<feature type="transmembrane region" description="Helical; Name=7" evidence="1">
    <location>
        <begin position="278"/>
        <end position="298"/>
    </location>
</feature>
<feature type="topological domain" description="Cytoplasmic" evidence="1">
    <location>
        <begin position="299"/>
        <end position="320"/>
    </location>
</feature>
<feature type="glycosylation site" description="N-linked (GlcNAc...) asparagine" evidence="1">
    <location>
        <position position="5"/>
    </location>
</feature>
<feature type="disulfide bond" evidence="2">
    <location>
        <begin position="97"/>
        <end position="189"/>
    </location>
</feature>
<feature type="sequence variant" id="VAR_034307" description="In dbSNP:rs7026705.">
    <original>A</original>
    <variation>D</variation>
    <location>
        <position position="19"/>
    </location>
</feature>
<gene>
    <name type="primary">OR13C8</name>
</gene>
<name>O13C8_HUMAN</name>
<protein>
    <recommendedName>
        <fullName>Olfactory receptor 13C8</fullName>
    </recommendedName>
</protein>
<organism>
    <name type="scientific">Homo sapiens</name>
    <name type="common">Human</name>
    <dbReference type="NCBI Taxonomy" id="9606"/>
    <lineage>
        <taxon>Eukaryota</taxon>
        <taxon>Metazoa</taxon>
        <taxon>Chordata</taxon>
        <taxon>Craniata</taxon>
        <taxon>Vertebrata</taxon>
        <taxon>Euteleostomi</taxon>
        <taxon>Mammalia</taxon>
        <taxon>Eutheria</taxon>
        <taxon>Euarchontoglires</taxon>
        <taxon>Primates</taxon>
        <taxon>Haplorrhini</taxon>
        <taxon>Catarrhini</taxon>
        <taxon>Hominidae</taxon>
        <taxon>Homo</taxon>
    </lineage>
</organism>
<accession>Q8NGS7</accession>
<accession>Q5VVG0</accession>
<accession>Q96R44</accession>
<keyword id="KW-1003">Cell membrane</keyword>
<keyword id="KW-1015">Disulfide bond</keyword>
<keyword id="KW-0297">G-protein coupled receptor</keyword>
<keyword id="KW-0325">Glycoprotein</keyword>
<keyword id="KW-0472">Membrane</keyword>
<keyword id="KW-0552">Olfaction</keyword>
<keyword id="KW-0675">Receptor</keyword>
<keyword id="KW-1185">Reference proteome</keyword>
<keyword id="KW-0716">Sensory transduction</keyword>
<keyword id="KW-0807">Transducer</keyword>
<keyword id="KW-0812">Transmembrane</keyword>
<keyword id="KW-1133">Transmembrane helix</keyword>
<evidence type="ECO:0000255" key="1"/>
<evidence type="ECO:0000255" key="2">
    <source>
        <dbReference type="PROSITE-ProRule" id="PRU00521"/>
    </source>
</evidence>
<evidence type="ECO:0000305" key="3"/>
<dbReference type="EMBL" id="AB065711">
    <property type="protein sequence ID" value="BAC05933.1"/>
    <property type="molecule type" value="Genomic_DNA"/>
</dbReference>
<dbReference type="EMBL" id="AL450426">
    <property type="status" value="NOT_ANNOTATED_CDS"/>
    <property type="molecule type" value="Genomic_DNA"/>
</dbReference>
<dbReference type="EMBL" id="AF399599">
    <property type="protein sequence ID" value="AAK95084.1"/>
    <property type="molecule type" value="Genomic_DNA"/>
</dbReference>
<dbReference type="CCDS" id="CCDS35090.1"/>
<dbReference type="RefSeq" id="NP_001004483.1">
    <property type="nucleotide sequence ID" value="NM_001004483.1"/>
</dbReference>
<dbReference type="SMR" id="Q8NGS7"/>
<dbReference type="BioGRID" id="126523">
    <property type="interactions" value="2"/>
</dbReference>
<dbReference type="FunCoup" id="Q8NGS7">
    <property type="interactions" value="484"/>
</dbReference>
<dbReference type="STRING" id="9606.ENSP00000334068"/>
<dbReference type="GlyCosmos" id="Q8NGS7">
    <property type="glycosylation" value="1 site, No reported glycans"/>
</dbReference>
<dbReference type="GlyGen" id="Q8NGS7">
    <property type="glycosylation" value="1 site"/>
</dbReference>
<dbReference type="iPTMnet" id="Q8NGS7"/>
<dbReference type="PhosphoSitePlus" id="Q8NGS7"/>
<dbReference type="BioMuta" id="OR13C8"/>
<dbReference type="DMDM" id="38372764"/>
<dbReference type="jPOST" id="Q8NGS7"/>
<dbReference type="MassIVE" id="Q8NGS7"/>
<dbReference type="PaxDb" id="9606-ENSP00000334068"/>
<dbReference type="PeptideAtlas" id="Q8NGS7"/>
<dbReference type="Antibodypedia" id="54625">
    <property type="antibodies" value="42 antibodies from 16 providers"/>
</dbReference>
<dbReference type="DNASU" id="138802"/>
<dbReference type="Ensembl" id="ENST00000335040.1">
    <property type="protein sequence ID" value="ENSP00000334068.1"/>
    <property type="gene ID" value="ENSG00000186943.1"/>
</dbReference>
<dbReference type="GeneID" id="138802"/>
<dbReference type="KEGG" id="hsa:138802"/>
<dbReference type="MANE-Select" id="ENST00000335040.1">
    <property type="protein sequence ID" value="ENSP00000334068.1"/>
    <property type="RefSeq nucleotide sequence ID" value="NM_001004483.1"/>
    <property type="RefSeq protein sequence ID" value="NP_001004483.1"/>
</dbReference>
<dbReference type="UCSC" id="uc011lvo.2">
    <property type="organism name" value="human"/>
</dbReference>
<dbReference type="AGR" id="HGNC:15103"/>
<dbReference type="CTD" id="138802"/>
<dbReference type="GeneCards" id="OR13C8"/>
<dbReference type="HGNC" id="HGNC:15103">
    <property type="gene designation" value="OR13C8"/>
</dbReference>
<dbReference type="HPA" id="ENSG00000186943">
    <property type="expression patterns" value="Not detected"/>
</dbReference>
<dbReference type="neXtProt" id="NX_Q8NGS7"/>
<dbReference type="OpenTargets" id="ENSG00000186943"/>
<dbReference type="PharmGKB" id="PA32038"/>
<dbReference type="VEuPathDB" id="HostDB:ENSG00000186943"/>
<dbReference type="eggNOG" id="ENOG502T8AA">
    <property type="taxonomic scope" value="Eukaryota"/>
</dbReference>
<dbReference type="GeneTree" id="ENSGT01040000240406"/>
<dbReference type="HOGENOM" id="CLU_012526_1_2_1"/>
<dbReference type="InParanoid" id="Q8NGS7"/>
<dbReference type="OMA" id="WVTGLVD"/>
<dbReference type="OrthoDB" id="6144223at2759"/>
<dbReference type="PAN-GO" id="Q8NGS7">
    <property type="GO annotations" value="0 GO annotations based on evolutionary models"/>
</dbReference>
<dbReference type="PhylomeDB" id="Q8NGS7"/>
<dbReference type="TreeFam" id="TF352686"/>
<dbReference type="PathwayCommons" id="Q8NGS7"/>
<dbReference type="Reactome" id="R-HSA-9752946">
    <property type="pathway name" value="Expression and translocation of olfactory receptors"/>
</dbReference>
<dbReference type="BioGRID-ORCS" id="138802">
    <property type="hits" value="7 hits in 742 CRISPR screens"/>
</dbReference>
<dbReference type="GeneWiki" id="OR13C8"/>
<dbReference type="GenomeRNAi" id="138802"/>
<dbReference type="Pharos" id="Q8NGS7">
    <property type="development level" value="Tdark"/>
</dbReference>
<dbReference type="PRO" id="PR:Q8NGS7"/>
<dbReference type="Proteomes" id="UP000005640">
    <property type="component" value="Chromosome 9"/>
</dbReference>
<dbReference type="RNAct" id="Q8NGS7">
    <property type="molecule type" value="protein"/>
</dbReference>
<dbReference type="ExpressionAtlas" id="Q8NGS7">
    <property type="expression patterns" value="baseline and differential"/>
</dbReference>
<dbReference type="GO" id="GO:0005886">
    <property type="term" value="C:plasma membrane"/>
    <property type="evidence" value="ECO:0000318"/>
    <property type="project" value="GO_Central"/>
</dbReference>
<dbReference type="GO" id="GO:0004930">
    <property type="term" value="F:G protein-coupled receptor activity"/>
    <property type="evidence" value="ECO:0007669"/>
    <property type="project" value="UniProtKB-KW"/>
</dbReference>
<dbReference type="GO" id="GO:0004984">
    <property type="term" value="F:olfactory receptor activity"/>
    <property type="evidence" value="ECO:0000318"/>
    <property type="project" value="GO_Central"/>
</dbReference>
<dbReference type="GO" id="GO:0050911">
    <property type="term" value="P:detection of chemical stimulus involved in sensory perception of smell"/>
    <property type="evidence" value="ECO:0000318"/>
    <property type="project" value="GO_Central"/>
</dbReference>
<dbReference type="CDD" id="cd15430">
    <property type="entry name" value="7tmA_OR13-like"/>
    <property type="match status" value="1"/>
</dbReference>
<dbReference type="FunFam" id="1.20.1070.10:FF:000501">
    <property type="entry name" value="Olfactory receptor"/>
    <property type="match status" value="1"/>
</dbReference>
<dbReference type="Gene3D" id="1.20.1070.10">
    <property type="entry name" value="Rhodopsin 7-helix transmembrane proteins"/>
    <property type="match status" value="1"/>
</dbReference>
<dbReference type="InterPro" id="IPR000276">
    <property type="entry name" value="GPCR_Rhodpsn"/>
</dbReference>
<dbReference type="InterPro" id="IPR017452">
    <property type="entry name" value="GPCR_Rhodpsn_7TM"/>
</dbReference>
<dbReference type="InterPro" id="IPR000725">
    <property type="entry name" value="Olfact_rcpt"/>
</dbReference>
<dbReference type="PANTHER" id="PTHR26453">
    <property type="entry name" value="OLFACTORY RECEPTOR"/>
    <property type="match status" value="1"/>
</dbReference>
<dbReference type="Pfam" id="PF13853">
    <property type="entry name" value="7tm_4"/>
    <property type="match status" value="1"/>
</dbReference>
<dbReference type="PRINTS" id="PR00237">
    <property type="entry name" value="GPCRRHODOPSN"/>
</dbReference>
<dbReference type="PRINTS" id="PR00245">
    <property type="entry name" value="OLFACTORYR"/>
</dbReference>
<dbReference type="SUPFAM" id="SSF81321">
    <property type="entry name" value="Family A G protein-coupled receptor-like"/>
    <property type="match status" value="1"/>
</dbReference>
<dbReference type="PROSITE" id="PS00237">
    <property type="entry name" value="G_PROTEIN_RECEP_F1_1"/>
    <property type="match status" value="1"/>
</dbReference>
<dbReference type="PROSITE" id="PS50262">
    <property type="entry name" value="G_PROTEIN_RECEP_F1_2"/>
    <property type="match status" value="1"/>
</dbReference>
<sequence length="320" mass="35294">MERTNDSTSTEFFLVGLSAHPKLQTVFFVLILWMYLMILLGNGVLISVIIFDSHLHTPMYFFLCNLSFLDVCYTSSSVPLILASFLAVKKKVSFSGCMVQMFISFAMGATECMILGTMALDRYVAICYPLRYPVIMSKGAYVAMAAGSWVTGLVDSVVQTAFAMQLPFCANNVIKHFVCEILAILKLACADISINVISMTGSNLIVLVIPLLVISISYIFIVATILRIPSTEGKHKAFSTCSAHLTVVIIFYGTIFFMYAKPESKASVDSGNEDIIEALISLFYGVMTPMLNPLIYSLRNKDVKAAVKNILCRKNFSDGK</sequence>
<proteinExistence type="inferred from homology"/>